<reference key="1">
    <citation type="journal article" date="1996" name="Science">
        <title>Complete genome sequence of the methanogenic archaeon, Methanococcus jannaschii.</title>
        <authorList>
            <person name="Bult C.J."/>
            <person name="White O."/>
            <person name="Olsen G.J."/>
            <person name="Zhou L."/>
            <person name="Fleischmann R.D."/>
            <person name="Sutton G.G."/>
            <person name="Blake J.A."/>
            <person name="FitzGerald L.M."/>
            <person name="Clayton R.A."/>
            <person name="Gocayne J.D."/>
            <person name="Kerlavage A.R."/>
            <person name="Dougherty B.A."/>
            <person name="Tomb J.-F."/>
            <person name="Adams M.D."/>
            <person name="Reich C.I."/>
            <person name="Overbeek R."/>
            <person name="Kirkness E.F."/>
            <person name="Weinstock K.G."/>
            <person name="Merrick J.M."/>
            <person name="Glodek A."/>
            <person name="Scott J.L."/>
            <person name="Geoghagen N.S.M."/>
            <person name="Weidman J.F."/>
            <person name="Fuhrmann J.L."/>
            <person name="Nguyen D."/>
            <person name="Utterback T.R."/>
            <person name="Kelley J.M."/>
            <person name="Peterson J.D."/>
            <person name="Sadow P.W."/>
            <person name="Hanna M.C."/>
            <person name="Cotton M.D."/>
            <person name="Roberts K.M."/>
            <person name="Hurst M.A."/>
            <person name="Kaine B.P."/>
            <person name="Borodovsky M."/>
            <person name="Klenk H.-P."/>
            <person name="Fraser C.M."/>
            <person name="Smith H.O."/>
            <person name="Woese C.R."/>
            <person name="Venter J.C."/>
        </authorList>
    </citation>
    <scope>NUCLEOTIDE SEQUENCE [LARGE SCALE GENOMIC DNA]</scope>
    <source>
        <strain>ATCC 43067 / DSM 2661 / JAL-1 / JCM 10045 / NBRC 100440</strain>
    </source>
</reference>
<evidence type="ECO:0000305" key="1"/>
<keyword id="KW-1185">Reference proteome</keyword>
<protein>
    <recommendedName>
        <fullName>Uncharacterized protein MJ0661</fullName>
    </recommendedName>
</protein>
<feature type="chain" id="PRO_0000106978" description="Uncharacterized protein MJ0661">
    <location>
        <begin position="1"/>
        <end position="182"/>
    </location>
</feature>
<gene>
    <name type="ordered locus">MJ0661</name>
</gene>
<organism>
    <name type="scientific">Methanocaldococcus jannaschii (strain ATCC 43067 / DSM 2661 / JAL-1 / JCM 10045 / NBRC 100440)</name>
    <name type="common">Methanococcus jannaschii</name>
    <dbReference type="NCBI Taxonomy" id="243232"/>
    <lineage>
        <taxon>Archaea</taxon>
        <taxon>Methanobacteriati</taxon>
        <taxon>Methanobacteriota</taxon>
        <taxon>Methanomada group</taxon>
        <taxon>Methanococci</taxon>
        <taxon>Methanococcales</taxon>
        <taxon>Methanocaldococcaceae</taxon>
        <taxon>Methanocaldococcus</taxon>
    </lineage>
</organism>
<name>Y661_METJA</name>
<comment type="similarity">
    <text evidence="1">To H.pylori HP0274.</text>
</comment>
<proteinExistence type="predicted"/>
<sequence length="182" mass="21570">MESVRRGKLMKNKKIKFDVYLNGIAYHCIKCGFCCDAPTVTKKDLAKIAGYLKIPFDEVLKRYVRFFNGYIGELKEVGGKCIFLDKKTKKCKIYKVRPLICRLRPYSVQVRNGKLTLTYDIWFLRYCRGLYLGDGKVEDEYFKYAELVLKYLGFEEGVDEEEFKRAKERLLEESLKYRKKKD</sequence>
<accession>Q58075</accession>
<dbReference type="EMBL" id="L77117">
    <property type="protein sequence ID" value="AAB98654.1"/>
    <property type="molecule type" value="Genomic_DNA"/>
</dbReference>
<dbReference type="PIR" id="E64382">
    <property type="entry name" value="E64382"/>
</dbReference>
<dbReference type="SMR" id="Q58075"/>
<dbReference type="STRING" id="243232.MJ_0661"/>
<dbReference type="PaxDb" id="243232-MJ_0661"/>
<dbReference type="EnsemblBacteria" id="AAB98654">
    <property type="protein sequence ID" value="AAB98654"/>
    <property type="gene ID" value="MJ_0661"/>
</dbReference>
<dbReference type="KEGG" id="mja:MJ_0661"/>
<dbReference type="eggNOG" id="arCOG02579">
    <property type="taxonomic scope" value="Archaea"/>
</dbReference>
<dbReference type="HOGENOM" id="CLU_1521868_0_0_2"/>
<dbReference type="InParanoid" id="Q58075"/>
<dbReference type="PhylomeDB" id="Q58075"/>
<dbReference type="Proteomes" id="UP000000805">
    <property type="component" value="Chromosome"/>
</dbReference>
<dbReference type="InterPro" id="IPR005358">
    <property type="entry name" value="Puta_zinc/iron-chelating_dom"/>
</dbReference>
<dbReference type="PANTHER" id="PTHR35866">
    <property type="entry name" value="PUTATIVE-RELATED"/>
    <property type="match status" value="1"/>
</dbReference>
<dbReference type="PANTHER" id="PTHR35866:SF2">
    <property type="entry name" value="YKGJ FAMILY CYSTEINE CLUSTER PROTEIN"/>
    <property type="match status" value="1"/>
</dbReference>
<dbReference type="Pfam" id="PF03692">
    <property type="entry name" value="CxxCxxCC"/>
    <property type="match status" value="1"/>
</dbReference>